<organism>
    <name type="scientific">Escherichia coli O9:H4 (strain HS)</name>
    <dbReference type="NCBI Taxonomy" id="331112"/>
    <lineage>
        <taxon>Bacteria</taxon>
        <taxon>Pseudomonadati</taxon>
        <taxon>Pseudomonadota</taxon>
        <taxon>Gammaproteobacteria</taxon>
        <taxon>Enterobacterales</taxon>
        <taxon>Enterobacteriaceae</taxon>
        <taxon>Escherichia</taxon>
    </lineage>
</organism>
<keyword id="KW-0298">Galactitol metabolism</keyword>
<protein>
    <recommendedName>
        <fullName evidence="1">D-tagatose-1,6-bisphosphate aldolase subunit GatZ</fullName>
    </recommendedName>
</protein>
<sequence>MKTLIARHKAGEHIGICSVCSAHPLVIEAALAFDRNSTRKVLIEATSNQVNQFGGYTGMTPADFREFVFTIADKVGFARERIILGGDHLGPNCWQQENADAAMEKSVELVKEYVRAGFSKIHLDASMSCAGDPIPLAPETVAERAAVLCFAAESVATDCQREQLSYVIGTEVPVPGGEASAIQSVHITHVEDAANTLRTHQKAFIARGLTEALTRVIAIVVQPGVEFDHSNIIHYQPQEAQPLAQWIENTRMVYEAHSTDYQTRTAYWELVRDHFAILKVGPALTFALREAIFALAQIEQELIAPENRSGCLAVIEEVMLDEPQYWKKYYRTGFNDSLLDIRYSLSDRIRYYWPHSRIKNSVDTMMVNLEGVDIPLGMISQYLPKQFERIQSGELSAIPHQLIMDKIYDVLRAYRYGCAE</sequence>
<gene>
    <name evidence="1" type="primary">gatZ</name>
    <name type="ordered locus">EcHS_A2231</name>
</gene>
<dbReference type="EMBL" id="CP000802">
    <property type="protein sequence ID" value="ABV06514.1"/>
    <property type="molecule type" value="Genomic_DNA"/>
</dbReference>
<dbReference type="RefSeq" id="WP_000853882.1">
    <property type="nucleotide sequence ID" value="NC_009800.1"/>
</dbReference>
<dbReference type="SMR" id="A8A1W0"/>
<dbReference type="KEGG" id="ecx:EcHS_A2231"/>
<dbReference type="HOGENOM" id="CLU_053334_0_0_6"/>
<dbReference type="UniPathway" id="UPA00704">
    <property type="reaction ID" value="UER00716"/>
</dbReference>
<dbReference type="GO" id="GO:0005886">
    <property type="term" value="C:plasma membrane"/>
    <property type="evidence" value="ECO:0007669"/>
    <property type="project" value="TreeGrafter"/>
</dbReference>
<dbReference type="GO" id="GO:2001059">
    <property type="term" value="P:D-tagatose 6-phosphate catabolic process"/>
    <property type="evidence" value="ECO:0007669"/>
    <property type="project" value="UniProtKB-UniRule"/>
</dbReference>
<dbReference type="GO" id="GO:0019402">
    <property type="term" value="P:galactitol metabolic process"/>
    <property type="evidence" value="ECO:0007669"/>
    <property type="project" value="UniProtKB-KW"/>
</dbReference>
<dbReference type="GO" id="GO:0009401">
    <property type="term" value="P:phosphoenolpyruvate-dependent sugar phosphotransferase system"/>
    <property type="evidence" value="ECO:0007669"/>
    <property type="project" value="TreeGrafter"/>
</dbReference>
<dbReference type="FunFam" id="3.20.20.70:FF:000141">
    <property type="entry name" value="D-tagatose-1,6-bisphosphate aldolase subunit GatZ"/>
    <property type="match status" value="1"/>
</dbReference>
<dbReference type="Gene3D" id="3.20.20.70">
    <property type="entry name" value="Aldolase class I"/>
    <property type="match status" value="1"/>
</dbReference>
<dbReference type="Gene3D" id="1.10.400.20">
    <property type="entry name" value="putative tagatose 6-phosphate kinase domain like"/>
    <property type="match status" value="1"/>
</dbReference>
<dbReference type="HAMAP" id="MF_01296">
    <property type="entry name" value="Tagatose_aldol_GatZ"/>
    <property type="match status" value="1"/>
</dbReference>
<dbReference type="InterPro" id="IPR013785">
    <property type="entry name" value="Aldolase_TIM"/>
</dbReference>
<dbReference type="InterPro" id="IPR012062">
    <property type="entry name" value="GatZ/KbaZ-like"/>
</dbReference>
<dbReference type="InterPro" id="IPR050303">
    <property type="entry name" value="GatZ_KbaZ_carbometab"/>
</dbReference>
<dbReference type="InterPro" id="IPR023436">
    <property type="entry name" value="TagBP_ald_GatZ"/>
</dbReference>
<dbReference type="NCBIfam" id="TIGR02810">
    <property type="entry name" value="agaZ_gatZ"/>
    <property type="match status" value="1"/>
</dbReference>
<dbReference type="NCBIfam" id="NF011626">
    <property type="entry name" value="PRK15052.1"/>
    <property type="match status" value="1"/>
</dbReference>
<dbReference type="PANTHER" id="PTHR32502:SF12">
    <property type="entry name" value="D-TAGATOSE-1,6-BISPHOSPHATE ALDOLASE SUBUNIT GATZ"/>
    <property type="match status" value="1"/>
</dbReference>
<dbReference type="PANTHER" id="PTHR32502">
    <property type="entry name" value="N-ACETYLGALACTOSAMINE PERMEASE II COMPONENT-RELATED"/>
    <property type="match status" value="1"/>
</dbReference>
<dbReference type="Pfam" id="PF08013">
    <property type="entry name" value="GatZ_KbaZ-like"/>
    <property type="match status" value="1"/>
</dbReference>
<dbReference type="PIRSF" id="PIRSF009264">
    <property type="entry name" value="TagBP_ald_AgaZ"/>
    <property type="match status" value="1"/>
</dbReference>
<dbReference type="SUPFAM" id="SSF51569">
    <property type="entry name" value="Aldolase"/>
    <property type="match status" value="1"/>
</dbReference>
<accession>A8A1W0</accession>
<reference key="1">
    <citation type="journal article" date="2008" name="J. Bacteriol.">
        <title>The pangenome structure of Escherichia coli: comparative genomic analysis of E. coli commensal and pathogenic isolates.</title>
        <authorList>
            <person name="Rasko D.A."/>
            <person name="Rosovitz M.J."/>
            <person name="Myers G.S.A."/>
            <person name="Mongodin E.F."/>
            <person name="Fricke W.F."/>
            <person name="Gajer P."/>
            <person name="Crabtree J."/>
            <person name="Sebaihia M."/>
            <person name="Thomson N.R."/>
            <person name="Chaudhuri R."/>
            <person name="Henderson I.R."/>
            <person name="Sperandio V."/>
            <person name="Ravel J."/>
        </authorList>
    </citation>
    <scope>NUCLEOTIDE SEQUENCE [LARGE SCALE GENOMIC DNA]</scope>
    <source>
        <strain>HS</strain>
    </source>
</reference>
<comment type="function">
    <text evidence="1">Component of the tagatose-1,6-bisphosphate aldolase GatYZ that is required for full activity and stability of the Y subunit. Could have a chaperone-like function for the proper and stable folding of GatY. When expressed alone, GatZ does not show any aldolase activity. Is involved in the catabolism of galactitol.</text>
</comment>
<comment type="pathway">
    <text evidence="1">Carbohydrate metabolism; D-tagatose 6-phosphate degradation; D-glyceraldehyde 3-phosphate and glycerone phosphate from D-tagatose 6-phosphate: step 2/2.</text>
</comment>
<comment type="subunit">
    <text evidence="1">Forms a complex with GatY.</text>
</comment>
<comment type="similarity">
    <text evidence="1">Belongs to the GatZ/KbaZ family. GatZ subfamily.</text>
</comment>
<proteinExistence type="inferred from homology"/>
<name>GATZ_ECOHS</name>
<evidence type="ECO:0000255" key="1">
    <source>
        <dbReference type="HAMAP-Rule" id="MF_01296"/>
    </source>
</evidence>
<feature type="chain" id="PRO_0000372505" description="D-tagatose-1,6-bisphosphate aldolase subunit GatZ">
    <location>
        <begin position="1"/>
        <end position="420"/>
    </location>
</feature>